<keyword id="KW-0328">Glycosyltransferase</keyword>
<keyword id="KW-0460">Magnesium</keyword>
<keyword id="KW-0665">Pyrimidine biosynthesis</keyword>
<keyword id="KW-1185">Reference proteome</keyword>
<keyword id="KW-0808">Transferase</keyword>
<feature type="chain" id="PRO_0000110687" description="Orotate phosphoribosyltransferase">
    <location>
        <begin position="1"/>
        <end position="214"/>
    </location>
</feature>
<feature type="binding site" description="in other chain" evidence="1">
    <location>
        <position position="26"/>
    </location>
    <ligand>
        <name>5-phospho-alpha-D-ribose 1-diphosphate</name>
        <dbReference type="ChEBI" id="CHEBI:58017"/>
        <note>ligand shared between dimeric partners</note>
    </ligand>
</feature>
<feature type="binding site" evidence="1">
    <location>
        <begin position="34"/>
        <end position="35"/>
    </location>
    <ligand>
        <name>orotate</name>
        <dbReference type="ChEBI" id="CHEBI:30839"/>
    </ligand>
</feature>
<feature type="binding site" description="in other chain" evidence="1">
    <location>
        <begin position="72"/>
        <end position="73"/>
    </location>
    <ligand>
        <name>5-phospho-alpha-D-ribose 1-diphosphate</name>
        <dbReference type="ChEBI" id="CHEBI:58017"/>
        <note>ligand shared between dimeric partners</note>
    </ligand>
</feature>
<feature type="binding site" evidence="1">
    <location>
        <position position="98"/>
    </location>
    <ligand>
        <name>5-phospho-alpha-D-ribose 1-diphosphate</name>
        <dbReference type="ChEBI" id="CHEBI:58017"/>
        <note>ligand shared between dimeric partners</note>
    </ligand>
</feature>
<feature type="binding site" description="in other chain" evidence="1">
    <location>
        <position position="99"/>
    </location>
    <ligand>
        <name>5-phospho-alpha-D-ribose 1-diphosphate</name>
        <dbReference type="ChEBI" id="CHEBI:58017"/>
        <note>ligand shared between dimeric partners</note>
    </ligand>
</feature>
<feature type="binding site" evidence="1">
    <location>
        <position position="102"/>
    </location>
    <ligand>
        <name>5-phospho-alpha-D-ribose 1-diphosphate</name>
        <dbReference type="ChEBI" id="CHEBI:58017"/>
        <note>ligand shared between dimeric partners</note>
    </ligand>
</feature>
<feature type="binding site" evidence="1">
    <location>
        <position position="104"/>
    </location>
    <ligand>
        <name>5-phospho-alpha-D-ribose 1-diphosphate</name>
        <dbReference type="ChEBI" id="CHEBI:58017"/>
        <note>ligand shared between dimeric partners</note>
    </ligand>
</feature>
<feature type="binding site" description="in other chain" evidence="1">
    <location>
        <begin position="123"/>
        <end position="131"/>
    </location>
    <ligand>
        <name>5-phospho-alpha-D-ribose 1-diphosphate</name>
        <dbReference type="ChEBI" id="CHEBI:58017"/>
        <note>ligand shared between dimeric partners</note>
    </ligand>
</feature>
<feature type="binding site" evidence="1">
    <location>
        <position position="127"/>
    </location>
    <ligand>
        <name>orotate</name>
        <dbReference type="ChEBI" id="CHEBI:30839"/>
    </ligand>
</feature>
<feature type="binding site" evidence="1">
    <location>
        <position position="155"/>
    </location>
    <ligand>
        <name>orotate</name>
        <dbReference type="ChEBI" id="CHEBI:30839"/>
    </ligand>
</feature>
<accession>Q7NQ92</accession>
<name>PYRE_CHRVO</name>
<reference key="1">
    <citation type="journal article" date="2003" name="Proc. Natl. Acad. Sci. U.S.A.">
        <title>The complete genome sequence of Chromobacterium violaceum reveals remarkable and exploitable bacterial adaptability.</title>
        <authorList>
            <person name="Vasconcelos A.T.R."/>
            <person name="de Almeida D.F."/>
            <person name="Hungria M."/>
            <person name="Guimaraes C.T."/>
            <person name="Antonio R.V."/>
            <person name="Almeida F.C."/>
            <person name="de Almeida L.G.P."/>
            <person name="de Almeida R."/>
            <person name="Alves-Gomes J.A."/>
            <person name="Andrade E.M."/>
            <person name="Araripe J."/>
            <person name="de Araujo M.F.F."/>
            <person name="Astolfi-Filho S."/>
            <person name="Azevedo V."/>
            <person name="Baptista A.J."/>
            <person name="Bataus L.A.M."/>
            <person name="Batista J.S."/>
            <person name="Belo A."/>
            <person name="van den Berg C."/>
            <person name="Bogo M."/>
            <person name="Bonatto S."/>
            <person name="Bordignon J."/>
            <person name="Brigido M.M."/>
            <person name="Brito C.A."/>
            <person name="Brocchi M."/>
            <person name="Burity H.A."/>
            <person name="Camargo A.A."/>
            <person name="Cardoso D.D.P."/>
            <person name="Carneiro N.P."/>
            <person name="Carraro D.M."/>
            <person name="Carvalho C.M.B."/>
            <person name="Cascardo J.C.M."/>
            <person name="Cavada B.S."/>
            <person name="Chueire L.M.O."/>
            <person name="Creczynski-Pasa T.B."/>
            <person name="Cunha-Junior N.C."/>
            <person name="Fagundes N."/>
            <person name="Falcao C.L."/>
            <person name="Fantinatti F."/>
            <person name="Farias I.P."/>
            <person name="Felipe M.S.S."/>
            <person name="Ferrari L.P."/>
            <person name="Ferro J.A."/>
            <person name="Ferro M.I.T."/>
            <person name="Franco G.R."/>
            <person name="Freitas N.S.A."/>
            <person name="Furlan L.R."/>
            <person name="Gazzinelli R.T."/>
            <person name="Gomes E.A."/>
            <person name="Goncalves P.R."/>
            <person name="Grangeiro T.B."/>
            <person name="Grattapaglia D."/>
            <person name="Grisard E.C."/>
            <person name="Hanna E.S."/>
            <person name="Jardim S.N."/>
            <person name="Laurino J."/>
            <person name="Leoi L.C.T."/>
            <person name="Lima L.F.A."/>
            <person name="Loureiro M.F."/>
            <person name="Lyra M.C.C.P."/>
            <person name="Madeira H.M.F."/>
            <person name="Manfio G.P."/>
            <person name="Maranhao A.Q."/>
            <person name="Martins W.S."/>
            <person name="di Mauro S.M.Z."/>
            <person name="de Medeiros S.R.B."/>
            <person name="Meissner R.V."/>
            <person name="Moreira M.A.M."/>
            <person name="Nascimento F.F."/>
            <person name="Nicolas M.F."/>
            <person name="Oliveira J.G."/>
            <person name="Oliveira S.C."/>
            <person name="Paixao R.F.C."/>
            <person name="Parente J.A."/>
            <person name="Pedrosa F.O."/>
            <person name="Pena S.D.J."/>
            <person name="Pereira J.O."/>
            <person name="Pereira M."/>
            <person name="Pinto L.S.R.C."/>
            <person name="Pinto L.S."/>
            <person name="Porto J.I.R."/>
            <person name="Potrich D.P."/>
            <person name="Ramalho-Neto C.E."/>
            <person name="Reis A.M.M."/>
            <person name="Rigo L.U."/>
            <person name="Rondinelli E."/>
            <person name="Santos E.B.P."/>
            <person name="Santos F.R."/>
            <person name="Schneider M.P.C."/>
            <person name="Seuanez H.N."/>
            <person name="Silva A.M.R."/>
            <person name="da Silva A.L.C."/>
            <person name="Silva D.W."/>
            <person name="Silva R."/>
            <person name="Simoes I.C."/>
            <person name="Simon D."/>
            <person name="Soares C.M.A."/>
            <person name="Soares R.B.A."/>
            <person name="Souza E.M."/>
            <person name="Souza K.R.L."/>
            <person name="Souza R.C."/>
            <person name="Steffens M.B.R."/>
            <person name="Steindel M."/>
            <person name="Teixeira S.R."/>
            <person name="Urmenyi T."/>
            <person name="Vettore A."/>
            <person name="Wassem R."/>
            <person name="Zaha A."/>
            <person name="Simpson A.J.G."/>
        </authorList>
    </citation>
    <scope>NUCLEOTIDE SEQUENCE [LARGE SCALE GENOMIC DNA]</scope>
    <source>
        <strain>ATCC 12472 / DSM 30191 / JCM 1249 / CCUG 213 / NBRC 12614 / NCIMB 9131 / NCTC 9757 / MK</strain>
    </source>
</reference>
<comment type="function">
    <text evidence="1">Catalyzes the transfer of a ribosyl phosphate group from 5-phosphoribose 1-diphosphate to orotate, leading to the formation of orotidine monophosphate (OMP).</text>
</comment>
<comment type="catalytic activity">
    <reaction evidence="1">
        <text>orotidine 5'-phosphate + diphosphate = orotate + 5-phospho-alpha-D-ribose 1-diphosphate</text>
        <dbReference type="Rhea" id="RHEA:10380"/>
        <dbReference type="ChEBI" id="CHEBI:30839"/>
        <dbReference type="ChEBI" id="CHEBI:33019"/>
        <dbReference type="ChEBI" id="CHEBI:57538"/>
        <dbReference type="ChEBI" id="CHEBI:58017"/>
        <dbReference type="EC" id="2.4.2.10"/>
    </reaction>
</comment>
<comment type="cofactor">
    <cofactor evidence="1">
        <name>Mg(2+)</name>
        <dbReference type="ChEBI" id="CHEBI:18420"/>
    </cofactor>
</comment>
<comment type="pathway">
    <text evidence="1">Pyrimidine metabolism; UMP biosynthesis via de novo pathway; UMP from orotate: step 1/2.</text>
</comment>
<comment type="subunit">
    <text evidence="1">Homodimer.</text>
</comment>
<comment type="similarity">
    <text evidence="1">Belongs to the purine/pyrimidine phosphoribosyltransferase family. PyrE subfamily.</text>
</comment>
<gene>
    <name evidence="1" type="primary">pyrE</name>
    <name type="ordered locus">CV_4248</name>
</gene>
<proteinExistence type="inferred from homology"/>
<evidence type="ECO:0000255" key="1">
    <source>
        <dbReference type="HAMAP-Rule" id="MF_01208"/>
    </source>
</evidence>
<sequence>MSDFRQDFIRFALDKQVLKFGEFITKAGRKSPYFFNAGLFNDGLSTLNLSRFYAKSIQQSGIQFDMLFGPAYKGIILAAAAGMALAEQGRNVPFAYNRKEAKDHGEGGTLVGAPLKGKVLIIDDVISAGTSVRESVELIRAAGAEPAGVAIALDRMERGQGELSAVQEVAQQHGLPVVAIATLKDLLGFLENSPELAAHLDAVRAYRAQYGVDD</sequence>
<organism>
    <name type="scientific">Chromobacterium violaceum (strain ATCC 12472 / DSM 30191 / JCM 1249 / CCUG 213 / NBRC 12614 / NCIMB 9131 / NCTC 9757 / MK)</name>
    <dbReference type="NCBI Taxonomy" id="243365"/>
    <lineage>
        <taxon>Bacteria</taxon>
        <taxon>Pseudomonadati</taxon>
        <taxon>Pseudomonadota</taxon>
        <taxon>Betaproteobacteria</taxon>
        <taxon>Neisseriales</taxon>
        <taxon>Chromobacteriaceae</taxon>
        <taxon>Chromobacterium</taxon>
    </lineage>
</organism>
<protein>
    <recommendedName>
        <fullName evidence="1">Orotate phosphoribosyltransferase</fullName>
        <shortName evidence="1">OPRT</shortName>
        <shortName evidence="1">OPRTase</shortName>
        <ecNumber evidence="1">2.4.2.10</ecNumber>
    </recommendedName>
</protein>
<dbReference type="EC" id="2.4.2.10" evidence="1"/>
<dbReference type="EMBL" id="AE016825">
    <property type="protein sequence ID" value="AAQ61908.2"/>
    <property type="molecule type" value="Genomic_DNA"/>
</dbReference>
<dbReference type="RefSeq" id="WP_011137794.1">
    <property type="nucleotide sequence ID" value="NC_005085.1"/>
</dbReference>
<dbReference type="SMR" id="Q7NQ92"/>
<dbReference type="STRING" id="243365.CV_4248"/>
<dbReference type="GeneID" id="66366274"/>
<dbReference type="KEGG" id="cvi:CV_4248"/>
<dbReference type="eggNOG" id="COG0461">
    <property type="taxonomic scope" value="Bacteria"/>
</dbReference>
<dbReference type="HOGENOM" id="CLU_074878_0_1_4"/>
<dbReference type="OrthoDB" id="9779060at2"/>
<dbReference type="UniPathway" id="UPA00070">
    <property type="reaction ID" value="UER00119"/>
</dbReference>
<dbReference type="Proteomes" id="UP000001424">
    <property type="component" value="Chromosome"/>
</dbReference>
<dbReference type="GO" id="GO:0005737">
    <property type="term" value="C:cytoplasm"/>
    <property type="evidence" value="ECO:0007669"/>
    <property type="project" value="TreeGrafter"/>
</dbReference>
<dbReference type="GO" id="GO:0000287">
    <property type="term" value="F:magnesium ion binding"/>
    <property type="evidence" value="ECO:0007669"/>
    <property type="project" value="UniProtKB-UniRule"/>
</dbReference>
<dbReference type="GO" id="GO:0004588">
    <property type="term" value="F:orotate phosphoribosyltransferase activity"/>
    <property type="evidence" value="ECO:0007669"/>
    <property type="project" value="UniProtKB-UniRule"/>
</dbReference>
<dbReference type="GO" id="GO:0006207">
    <property type="term" value="P:'de novo' pyrimidine nucleobase biosynthetic process"/>
    <property type="evidence" value="ECO:0007669"/>
    <property type="project" value="TreeGrafter"/>
</dbReference>
<dbReference type="GO" id="GO:0044205">
    <property type="term" value="P:'de novo' UMP biosynthetic process"/>
    <property type="evidence" value="ECO:0007669"/>
    <property type="project" value="UniProtKB-UniRule"/>
</dbReference>
<dbReference type="GO" id="GO:0046132">
    <property type="term" value="P:pyrimidine ribonucleoside biosynthetic process"/>
    <property type="evidence" value="ECO:0007669"/>
    <property type="project" value="TreeGrafter"/>
</dbReference>
<dbReference type="CDD" id="cd06223">
    <property type="entry name" value="PRTases_typeI"/>
    <property type="match status" value="1"/>
</dbReference>
<dbReference type="FunFam" id="3.40.50.2020:FF:000008">
    <property type="entry name" value="Orotate phosphoribosyltransferase"/>
    <property type="match status" value="1"/>
</dbReference>
<dbReference type="Gene3D" id="3.40.50.2020">
    <property type="match status" value="1"/>
</dbReference>
<dbReference type="HAMAP" id="MF_01208">
    <property type="entry name" value="PyrE"/>
    <property type="match status" value="1"/>
</dbReference>
<dbReference type="InterPro" id="IPR023031">
    <property type="entry name" value="OPRT"/>
</dbReference>
<dbReference type="InterPro" id="IPR004467">
    <property type="entry name" value="Or_phspho_trans_dom"/>
</dbReference>
<dbReference type="InterPro" id="IPR000836">
    <property type="entry name" value="PRibTrfase_dom"/>
</dbReference>
<dbReference type="InterPro" id="IPR029057">
    <property type="entry name" value="PRTase-like"/>
</dbReference>
<dbReference type="NCBIfam" id="TIGR00336">
    <property type="entry name" value="pyrE"/>
    <property type="match status" value="1"/>
</dbReference>
<dbReference type="PANTHER" id="PTHR46683">
    <property type="entry name" value="OROTATE PHOSPHORIBOSYLTRANSFERASE 1-RELATED"/>
    <property type="match status" value="1"/>
</dbReference>
<dbReference type="PANTHER" id="PTHR46683:SF1">
    <property type="entry name" value="OROTATE PHOSPHORIBOSYLTRANSFERASE 1-RELATED"/>
    <property type="match status" value="1"/>
</dbReference>
<dbReference type="Pfam" id="PF00156">
    <property type="entry name" value="Pribosyltran"/>
    <property type="match status" value="1"/>
</dbReference>
<dbReference type="SUPFAM" id="SSF53271">
    <property type="entry name" value="PRTase-like"/>
    <property type="match status" value="1"/>
</dbReference>
<dbReference type="PROSITE" id="PS00103">
    <property type="entry name" value="PUR_PYR_PR_TRANSFER"/>
    <property type="match status" value="1"/>
</dbReference>